<organism>
    <name type="scientific">Hahella chejuensis (strain KCTC 2396)</name>
    <dbReference type="NCBI Taxonomy" id="349521"/>
    <lineage>
        <taxon>Bacteria</taxon>
        <taxon>Pseudomonadati</taxon>
        <taxon>Pseudomonadota</taxon>
        <taxon>Gammaproteobacteria</taxon>
        <taxon>Oceanospirillales</taxon>
        <taxon>Hahellaceae</taxon>
        <taxon>Hahella</taxon>
    </lineage>
</organism>
<accession>Q2SBD7</accession>
<dbReference type="EC" id="2.1.1.197" evidence="1"/>
<dbReference type="EMBL" id="CP000155">
    <property type="protein sequence ID" value="ABC32037.1"/>
    <property type="molecule type" value="Genomic_DNA"/>
</dbReference>
<dbReference type="RefSeq" id="WP_011399101.1">
    <property type="nucleotide sequence ID" value="NC_007645.1"/>
</dbReference>
<dbReference type="SMR" id="Q2SBD7"/>
<dbReference type="STRING" id="349521.HCH_05368"/>
<dbReference type="KEGG" id="hch:HCH_05368"/>
<dbReference type="eggNOG" id="COG2226">
    <property type="taxonomic scope" value="Bacteria"/>
</dbReference>
<dbReference type="HOGENOM" id="CLU_046586_2_2_6"/>
<dbReference type="OrthoDB" id="9760689at2"/>
<dbReference type="UniPathway" id="UPA00078"/>
<dbReference type="Proteomes" id="UP000000238">
    <property type="component" value="Chromosome"/>
</dbReference>
<dbReference type="GO" id="GO:0010340">
    <property type="term" value="F:carboxyl-O-methyltransferase activity"/>
    <property type="evidence" value="ECO:0007669"/>
    <property type="project" value="UniProtKB-UniRule"/>
</dbReference>
<dbReference type="GO" id="GO:0102130">
    <property type="term" value="F:malonyl-CoA methyltransferase activity"/>
    <property type="evidence" value="ECO:0007669"/>
    <property type="project" value="UniProtKB-EC"/>
</dbReference>
<dbReference type="GO" id="GO:0008757">
    <property type="term" value="F:S-adenosylmethionine-dependent methyltransferase activity"/>
    <property type="evidence" value="ECO:0007669"/>
    <property type="project" value="InterPro"/>
</dbReference>
<dbReference type="GO" id="GO:0009102">
    <property type="term" value="P:biotin biosynthetic process"/>
    <property type="evidence" value="ECO:0007669"/>
    <property type="project" value="UniProtKB-UniRule"/>
</dbReference>
<dbReference type="GO" id="GO:0032259">
    <property type="term" value="P:methylation"/>
    <property type="evidence" value="ECO:0007669"/>
    <property type="project" value="UniProtKB-KW"/>
</dbReference>
<dbReference type="CDD" id="cd02440">
    <property type="entry name" value="AdoMet_MTases"/>
    <property type="match status" value="1"/>
</dbReference>
<dbReference type="Gene3D" id="3.40.50.150">
    <property type="entry name" value="Vaccinia Virus protein VP39"/>
    <property type="match status" value="1"/>
</dbReference>
<dbReference type="HAMAP" id="MF_00835">
    <property type="entry name" value="BioC"/>
    <property type="match status" value="1"/>
</dbReference>
<dbReference type="InterPro" id="IPR011814">
    <property type="entry name" value="BioC"/>
</dbReference>
<dbReference type="InterPro" id="IPR050602">
    <property type="entry name" value="Malonyl-ACP_OMT"/>
</dbReference>
<dbReference type="InterPro" id="IPR013216">
    <property type="entry name" value="Methyltransf_11"/>
</dbReference>
<dbReference type="InterPro" id="IPR029063">
    <property type="entry name" value="SAM-dependent_MTases_sf"/>
</dbReference>
<dbReference type="NCBIfam" id="TIGR02072">
    <property type="entry name" value="BioC"/>
    <property type="match status" value="1"/>
</dbReference>
<dbReference type="PANTHER" id="PTHR13090">
    <property type="entry name" value="ARGININE-HYDROXYLASE NDUFAF5, MITOCHONDRIAL"/>
    <property type="match status" value="1"/>
</dbReference>
<dbReference type="PANTHER" id="PTHR13090:SF1">
    <property type="entry name" value="ARGININE-HYDROXYLASE NDUFAF5, MITOCHONDRIAL"/>
    <property type="match status" value="1"/>
</dbReference>
<dbReference type="Pfam" id="PF08241">
    <property type="entry name" value="Methyltransf_11"/>
    <property type="match status" value="1"/>
</dbReference>
<dbReference type="SUPFAM" id="SSF53335">
    <property type="entry name" value="S-adenosyl-L-methionine-dependent methyltransferases"/>
    <property type="match status" value="1"/>
</dbReference>
<evidence type="ECO:0000255" key="1">
    <source>
        <dbReference type="HAMAP-Rule" id="MF_00835"/>
    </source>
</evidence>
<feature type="chain" id="PRO_0000412501" description="Malonyl-[acyl-carrier protein] O-methyltransferase">
    <location>
        <begin position="1"/>
        <end position="279"/>
    </location>
</feature>
<comment type="function">
    <text evidence="1">Converts the free carboxyl group of a malonyl-thioester to its methyl ester by transfer of a methyl group from S-adenosyl-L-methionine (SAM). It allows to synthesize pimeloyl-ACP via the fatty acid synthetic pathway.</text>
</comment>
<comment type="catalytic activity">
    <reaction evidence="1">
        <text>malonyl-[ACP] + S-adenosyl-L-methionine = malonyl-[ACP] methyl ester + S-adenosyl-L-homocysteine</text>
        <dbReference type="Rhea" id="RHEA:17105"/>
        <dbReference type="Rhea" id="RHEA-COMP:9623"/>
        <dbReference type="Rhea" id="RHEA-COMP:9954"/>
        <dbReference type="ChEBI" id="CHEBI:57856"/>
        <dbReference type="ChEBI" id="CHEBI:59789"/>
        <dbReference type="ChEBI" id="CHEBI:78449"/>
        <dbReference type="ChEBI" id="CHEBI:78845"/>
        <dbReference type="EC" id="2.1.1.197"/>
    </reaction>
</comment>
<comment type="pathway">
    <text evidence="1">Cofactor biosynthesis; biotin biosynthesis.</text>
</comment>
<comment type="similarity">
    <text evidence="1">Belongs to the methyltransferase superfamily.</text>
</comment>
<protein>
    <recommendedName>
        <fullName evidence="1">Malonyl-[acyl-carrier protein] O-methyltransferase</fullName>
        <shortName evidence="1">Malonyl-ACP O-methyltransferase</shortName>
        <ecNumber evidence="1">2.1.1.197</ecNumber>
    </recommendedName>
    <alternativeName>
        <fullName evidence="1">Biotin synthesis protein BioC</fullName>
    </alternativeName>
</protein>
<name>BIOC_HAHCH</name>
<gene>
    <name evidence="1" type="primary">bioC</name>
    <name type="ordered locus">HCH_05368</name>
</gene>
<proteinExistence type="inferred from homology"/>
<reference key="1">
    <citation type="journal article" date="2005" name="Nucleic Acids Res.">
        <title>Genomic blueprint of Hahella chejuensis, a marine microbe producing an algicidal agent.</title>
        <authorList>
            <person name="Jeong H."/>
            <person name="Yim J.H."/>
            <person name="Lee C."/>
            <person name="Choi S.-H."/>
            <person name="Park Y.K."/>
            <person name="Yoon S.H."/>
            <person name="Hur C.-G."/>
            <person name="Kang H.-Y."/>
            <person name="Kim D."/>
            <person name="Lee H.H."/>
            <person name="Park K.H."/>
            <person name="Park S.-H."/>
            <person name="Park H.-S."/>
            <person name="Lee H.K."/>
            <person name="Oh T.K."/>
            <person name="Kim J.F."/>
        </authorList>
    </citation>
    <scope>NUCLEOTIDE SEQUENCE [LARGE SCALE GENOMIC DNA]</scope>
    <source>
        <strain>KCTC 2396</strain>
    </source>
</reference>
<sequence>MNHAVTIKSFVSTSPLSDLERGAVDKSKVAESFSAAAATYDLLAGMQKEVGESLVSLSREGCPQDIIDVGCGTGWLTHRLKNSFPEARLCAYDLSPGMIEYALAHHDNVAEIWAVADMESLPVANASQDLVFSNMAMQWLDDPRAWFAEASRVLRPGGRLICSTLLTQTLFELEQAWHGVDGGRHVNRFLSAEQVAEAAVSCGLRGECRESLYVRFHDSALDVMKELKGIGAHNIQSERPQGLTGKRRLRRVIENYEKCRQEQGVPATYHVGVCVYSRI</sequence>
<keyword id="KW-0093">Biotin biosynthesis</keyword>
<keyword id="KW-0489">Methyltransferase</keyword>
<keyword id="KW-1185">Reference proteome</keyword>
<keyword id="KW-0949">S-adenosyl-L-methionine</keyword>
<keyword id="KW-0808">Transferase</keyword>